<proteinExistence type="evidence at transcript level"/>
<name>RLR26_PLAHL</name>
<accession>A0A0P1AL95</accession>
<sequence length="120" mass="12965">MTGILCFPPFARFFMLLSGCAWLAGVSSGTSLVASAFSDENQLSEFVHVAEIAQIHRNLRGHINSAIIEANDTSEERMQPNNVVGEGKAPSGAQETVAQILVKGMNKVADFLKDLTRSQK</sequence>
<dbReference type="EMBL" id="CCYD01000553">
    <property type="protein sequence ID" value="CEG41649.1"/>
    <property type="molecule type" value="Genomic_DNA"/>
</dbReference>
<dbReference type="GlyCosmos" id="A0A0P1AL95">
    <property type="glycosylation" value="1 site, No reported glycans"/>
</dbReference>
<dbReference type="EnsemblProtists" id="CEG41649">
    <property type="protein sequence ID" value="CEG41649"/>
    <property type="gene ID" value="CEG41649"/>
</dbReference>
<dbReference type="Proteomes" id="UP000054928">
    <property type="component" value="Unassembled WGS sequence"/>
</dbReference>
<dbReference type="GO" id="GO:0005576">
    <property type="term" value="C:extracellular region"/>
    <property type="evidence" value="ECO:0007669"/>
    <property type="project" value="UniProtKB-SubCell"/>
</dbReference>
<dbReference type="GO" id="GO:0030430">
    <property type="term" value="C:host cell cytoplasm"/>
    <property type="evidence" value="ECO:0007669"/>
    <property type="project" value="UniProtKB-SubCell"/>
</dbReference>
<dbReference type="GO" id="GO:0042025">
    <property type="term" value="C:host cell nucleus"/>
    <property type="evidence" value="ECO:0007669"/>
    <property type="project" value="UniProtKB-SubCell"/>
</dbReference>
<feature type="signal peptide" evidence="1">
    <location>
        <begin position="1"/>
        <end position="29"/>
    </location>
</feature>
<feature type="chain" id="PRO_5006058748" description="Secreted RxLR effector protein RXLR-C26">
    <location>
        <begin position="30"/>
        <end position="120"/>
    </location>
</feature>
<feature type="short sequence motif" description="RxLR-dEER" evidence="6">
    <location>
        <begin position="57"/>
        <end position="77"/>
    </location>
</feature>
<feature type="glycosylation site" description="N-linked (GlcNAc...) asparagine" evidence="2">
    <location>
        <position position="71"/>
    </location>
</feature>
<evidence type="ECO:0000255" key="1"/>
<evidence type="ECO:0000255" key="2">
    <source>
        <dbReference type="PROSITE-ProRule" id="PRU00498"/>
    </source>
</evidence>
<evidence type="ECO:0000269" key="3">
    <source>
    </source>
</evidence>
<evidence type="ECO:0000303" key="4">
    <source>
    </source>
</evidence>
<evidence type="ECO:0000305" key="5"/>
<evidence type="ECO:0000305" key="6">
    <source>
    </source>
</evidence>
<gene>
    <name evidence="4" type="primary">RXLR-C26</name>
</gene>
<organism>
    <name type="scientific">Plasmopara halstedii</name>
    <name type="common">Downy mildew of sunflower</name>
    <dbReference type="NCBI Taxonomy" id="4781"/>
    <lineage>
        <taxon>Eukaryota</taxon>
        <taxon>Sar</taxon>
        <taxon>Stramenopiles</taxon>
        <taxon>Oomycota</taxon>
        <taxon>Peronosporales</taxon>
        <taxon>Peronosporaceae</taxon>
        <taxon>Plasmopara</taxon>
    </lineage>
</organism>
<comment type="function">
    <text evidence="3">Secreted effector that does not suppress pattern-triggered immunity (PTI) in plant host.</text>
</comment>
<comment type="subcellular location">
    <subcellularLocation>
        <location evidence="3">Secreted</location>
    </subcellularLocation>
    <subcellularLocation>
        <location evidence="3">Host cytoplasm</location>
    </subcellularLocation>
    <subcellularLocation>
        <location evidence="3">Host nucleus</location>
    </subcellularLocation>
</comment>
<comment type="induction">
    <text evidence="3">Expression is up-regulated in spores.</text>
</comment>
<comment type="domain">
    <text evidence="6">The RxLR-dEER motif acts to carry the protein into the host cell cytoplasm through binding to cell surface phosphatidylinositol-3-phosphate.</text>
</comment>
<comment type="similarity">
    <text evidence="5">Belongs to the RxLR effector family.</text>
</comment>
<reference key="1">
    <citation type="journal article" date="2015" name="BMC Genomics">
        <title>Genome analyses of the sunflower pathogen Plasmopara halstedii provide insights into effector evolution in downy mildews and Phytophthora.</title>
        <authorList>
            <person name="Sharma R."/>
            <person name="Xia X."/>
            <person name="Cano L.M."/>
            <person name="Evangelisti E."/>
            <person name="Kemen E."/>
            <person name="Judelson H."/>
            <person name="Oome S."/>
            <person name="Sambles C."/>
            <person name="van den Hoogen D.J."/>
            <person name="Kitner M."/>
            <person name="Klein J."/>
            <person name="Meijer H.J."/>
            <person name="Spring O."/>
            <person name="Win J."/>
            <person name="Zipper R."/>
            <person name="Bode H.B."/>
            <person name="Govers F."/>
            <person name="Kamoun S."/>
            <person name="Schornack S."/>
            <person name="Studholme D.J."/>
            <person name="Van den Ackerveken G."/>
            <person name="Thines M."/>
        </authorList>
    </citation>
    <scope>NUCLEOTIDE SEQUENCE [LARGE SCALE GENOMIC DNA]</scope>
</reference>
<reference key="2">
    <citation type="journal article" date="2019" name="Plant J.">
        <title>Sunflower resistance to multiple downy mildew pathotypes revealed by recognition of conserved effectors of the oomycete Plasmopara halstedii.</title>
        <authorList>
            <person name="Pecrix Y."/>
            <person name="Buendia L."/>
            <person name="Penouilh-Suzette C."/>
            <person name="Marechaux M."/>
            <person name="Legrand L."/>
            <person name="Bouchez O."/>
            <person name="Rengel D."/>
            <person name="Gouzy J."/>
            <person name="Cottret L."/>
            <person name="Vear F."/>
            <person name="Godiard L."/>
        </authorList>
    </citation>
    <scope>DOMAIN</scope>
    <scope>INDUCTION</scope>
    <scope>FUNCTION</scope>
    <scope>SUBCELLULAR LOCATION</scope>
</reference>
<protein>
    <recommendedName>
        <fullName evidence="4">Secreted RxLR effector protein RXLR-C26</fullName>
    </recommendedName>
</protein>
<keyword id="KW-0325">Glycoprotein</keyword>
<keyword id="KW-1035">Host cytoplasm</keyword>
<keyword id="KW-1048">Host nucleus</keyword>
<keyword id="KW-1185">Reference proteome</keyword>
<keyword id="KW-0964">Secreted</keyword>
<keyword id="KW-0732">Signal</keyword>
<keyword id="KW-0843">Virulence</keyword>